<proteinExistence type="inferred from homology"/>
<keyword id="KW-1003">Cell membrane</keyword>
<keyword id="KW-0210">Decarboxylase</keyword>
<keyword id="KW-0444">Lipid biosynthesis</keyword>
<keyword id="KW-0443">Lipid metabolism</keyword>
<keyword id="KW-0456">Lyase</keyword>
<keyword id="KW-0472">Membrane</keyword>
<keyword id="KW-0594">Phospholipid biosynthesis</keyword>
<keyword id="KW-1208">Phospholipid metabolism</keyword>
<keyword id="KW-0670">Pyruvate</keyword>
<keyword id="KW-0865">Zymogen</keyword>
<reference key="1">
    <citation type="submission" date="2008-06" db="EMBL/GenBank/DDBJ databases">
        <title>Complete sequence of Chlorobaculum parvum NCIB 8327.</title>
        <authorList>
            <consortium name="US DOE Joint Genome Institute"/>
            <person name="Lucas S."/>
            <person name="Copeland A."/>
            <person name="Lapidus A."/>
            <person name="Glavina del Rio T."/>
            <person name="Dalin E."/>
            <person name="Tice H."/>
            <person name="Bruce D."/>
            <person name="Goodwin L."/>
            <person name="Pitluck S."/>
            <person name="Schmutz J."/>
            <person name="Larimer F."/>
            <person name="Land M."/>
            <person name="Hauser L."/>
            <person name="Kyrpides N."/>
            <person name="Mikhailova N."/>
            <person name="Zhao F."/>
            <person name="Li T."/>
            <person name="Liu Z."/>
            <person name="Overmann J."/>
            <person name="Bryant D.A."/>
            <person name="Richardson P."/>
        </authorList>
    </citation>
    <scope>NUCLEOTIDE SEQUENCE [LARGE SCALE GENOMIC DNA]</scope>
    <source>
        <strain>DSM 263 / NCIMB 8327</strain>
    </source>
</reference>
<protein>
    <recommendedName>
        <fullName evidence="1">Phosphatidylserine decarboxylase proenzyme</fullName>
        <ecNumber evidence="1">4.1.1.65</ecNumber>
    </recommendedName>
    <component>
        <recommendedName>
            <fullName evidence="1">Phosphatidylserine decarboxylase alpha chain</fullName>
        </recommendedName>
    </component>
    <component>
        <recommendedName>
            <fullName evidence="1">Phosphatidylserine decarboxylase beta chain</fullName>
        </recommendedName>
    </component>
</protein>
<evidence type="ECO:0000255" key="1">
    <source>
        <dbReference type="HAMAP-Rule" id="MF_00664"/>
    </source>
</evidence>
<sequence length="214" mass="23230">MRISPYGAGSVTTTAIFCSLFFVTGFFLPQPGGAALSLAVLLFLFFTLFFYRDPEREIPTEPGAVIAPADGKIVLKQSIDHPVTGDGSTLVSIFMSPFNVHVNRIPISGRVLNLNYVPGKYLMAFDHRSMTDNERMEITLETAAGTIWFCQVSGFVARRIVCDLKPGQEVTTGNLFGMIKLGSRVDIVLPPSVKVSASVGMKTVGGTTILGWIY</sequence>
<dbReference type="EC" id="4.1.1.65" evidence="1"/>
<dbReference type="EMBL" id="CP001099">
    <property type="protein sequence ID" value="ACF10991.1"/>
    <property type="molecule type" value="Genomic_DNA"/>
</dbReference>
<dbReference type="RefSeq" id="WP_012501824.1">
    <property type="nucleotide sequence ID" value="NC_011027.1"/>
</dbReference>
<dbReference type="STRING" id="517417.Cpar_0571"/>
<dbReference type="KEGG" id="cpc:Cpar_0571"/>
<dbReference type="eggNOG" id="COG0688">
    <property type="taxonomic scope" value="Bacteria"/>
</dbReference>
<dbReference type="HOGENOM" id="CLU_072492_2_0_10"/>
<dbReference type="OrthoDB" id="9790893at2"/>
<dbReference type="UniPathway" id="UPA00558">
    <property type="reaction ID" value="UER00616"/>
</dbReference>
<dbReference type="Proteomes" id="UP000008811">
    <property type="component" value="Chromosome"/>
</dbReference>
<dbReference type="GO" id="GO:0005886">
    <property type="term" value="C:plasma membrane"/>
    <property type="evidence" value="ECO:0007669"/>
    <property type="project" value="UniProtKB-SubCell"/>
</dbReference>
<dbReference type="GO" id="GO:0004609">
    <property type="term" value="F:phosphatidylserine decarboxylase activity"/>
    <property type="evidence" value="ECO:0007669"/>
    <property type="project" value="UniProtKB-UniRule"/>
</dbReference>
<dbReference type="GO" id="GO:0006646">
    <property type="term" value="P:phosphatidylethanolamine biosynthetic process"/>
    <property type="evidence" value="ECO:0007669"/>
    <property type="project" value="UniProtKB-UniRule"/>
</dbReference>
<dbReference type="HAMAP" id="MF_00664">
    <property type="entry name" value="PS_decarb_PSD_A"/>
    <property type="match status" value="1"/>
</dbReference>
<dbReference type="InterPro" id="IPR003817">
    <property type="entry name" value="PS_Dcarbxylase"/>
</dbReference>
<dbReference type="InterPro" id="IPR033175">
    <property type="entry name" value="PSD-A"/>
</dbReference>
<dbReference type="NCBIfam" id="NF003682">
    <property type="entry name" value="PRK05305.2-2"/>
    <property type="match status" value="1"/>
</dbReference>
<dbReference type="NCBIfam" id="NF003685">
    <property type="entry name" value="PRK05305.2-5"/>
    <property type="match status" value="1"/>
</dbReference>
<dbReference type="PANTHER" id="PTHR35809">
    <property type="entry name" value="ARCHAETIDYLSERINE DECARBOXYLASE PROENZYME-RELATED"/>
    <property type="match status" value="1"/>
</dbReference>
<dbReference type="PANTHER" id="PTHR35809:SF1">
    <property type="entry name" value="ARCHAETIDYLSERINE DECARBOXYLASE PROENZYME-RELATED"/>
    <property type="match status" value="1"/>
</dbReference>
<dbReference type="Pfam" id="PF02666">
    <property type="entry name" value="PS_Dcarbxylase"/>
    <property type="match status" value="1"/>
</dbReference>
<accession>B3QM38</accession>
<name>PSD_CHLP8</name>
<gene>
    <name evidence="1" type="primary">psd</name>
    <name type="ordered locus">Cpar_0571</name>
</gene>
<organism>
    <name type="scientific">Chlorobaculum parvum (strain DSM 263 / NCIMB 8327)</name>
    <name type="common">Chlorobium vibrioforme subsp. thiosulfatophilum</name>
    <dbReference type="NCBI Taxonomy" id="517417"/>
    <lineage>
        <taxon>Bacteria</taxon>
        <taxon>Pseudomonadati</taxon>
        <taxon>Chlorobiota</taxon>
        <taxon>Chlorobiia</taxon>
        <taxon>Chlorobiales</taxon>
        <taxon>Chlorobiaceae</taxon>
        <taxon>Chlorobaculum</taxon>
    </lineage>
</organism>
<feature type="chain" id="PRO_1000131458" description="Phosphatidylserine decarboxylase beta chain" evidence="1">
    <location>
        <begin position="1"/>
        <end position="182"/>
    </location>
</feature>
<feature type="chain" id="PRO_1000131459" description="Phosphatidylserine decarboxylase alpha chain" evidence="1">
    <location>
        <begin position="183"/>
        <end position="214"/>
    </location>
</feature>
<feature type="active site" description="Schiff-base intermediate with substrate; via pyruvic acid" evidence="1">
    <location>
        <position position="183"/>
    </location>
</feature>
<feature type="site" description="Cleavage (non-hydrolytic); by autocatalysis" evidence="1">
    <location>
        <begin position="182"/>
        <end position="183"/>
    </location>
</feature>
<feature type="modified residue" description="Pyruvic acid (Ser); by autocatalysis" evidence="1">
    <location>
        <position position="183"/>
    </location>
</feature>
<comment type="function">
    <text evidence="1">Catalyzes the formation of phosphatidylethanolamine (PtdEtn) from phosphatidylserine (PtdSer).</text>
</comment>
<comment type="catalytic activity">
    <reaction evidence="1">
        <text>a 1,2-diacyl-sn-glycero-3-phospho-L-serine + H(+) = a 1,2-diacyl-sn-glycero-3-phosphoethanolamine + CO2</text>
        <dbReference type="Rhea" id="RHEA:20828"/>
        <dbReference type="ChEBI" id="CHEBI:15378"/>
        <dbReference type="ChEBI" id="CHEBI:16526"/>
        <dbReference type="ChEBI" id="CHEBI:57262"/>
        <dbReference type="ChEBI" id="CHEBI:64612"/>
        <dbReference type="EC" id="4.1.1.65"/>
    </reaction>
</comment>
<comment type="cofactor">
    <cofactor evidence="1">
        <name>pyruvate</name>
        <dbReference type="ChEBI" id="CHEBI:15361"/>
    </cofactor>
    <text evidence="1">Binds 1 pyruvoyl group covalently per subunit.</text>
</comment>
<comment type="pathway">
    <text evidence="1">Phospholipid metabolism; phosphatidylethanolamine biosynthesis; phosphatidylethanolamine from CDP-diacylglycerol: step 2/2.</text>
</comment>
<comment type="subunit">
    <text evidence="1">Heterodimer of a large membrane-associated beta subunit and a small pyruvoyl-containing alpha subunit.</text>
</comment>
<comment type="subcellular location">
    <subcellularLocation>
        <location evidence="1">Cell membrane</location>
        <topology evidence="1">Peripheral membrane protein</topology>
    </subcellularLocation>
</comment>
<comment type="PTM">
    <text evidence="1">Is synthesized initially as an inactive proenzyme. Formation of the active enzyme involves a self-maturation process in which the active site pyruvoyl group is generated from an internal serine residue via an autocatalytic post-translational modification. Two non-identical subunits are generated from the proenzyme in this reaction, and the pyruvate is formed at the N-terminus of the alpha chain, which is derived from the carboxyl end of the proenzyme. The post-translation cleavage follows an unusual pathway, termed non-hydrolytic serinolysis, in which the side chain hydroxyl group of the serine supplies its oxygen atom to form the C-terminus of the beta chain, while the remainder of the serine residue undergoes an oxidative deamination to produce ammonia and the pyruvoyl prosthetic group on the alpha chain.</text>
</comment>
<comment type="similarity">
    <text evidence="1">Belongs to the phosphatidylserine decarboxylase family. PSD-A subfamily.</text>
</comment>